<dbReference type="EMBL" id="BT021693">
    <property type="protein sequence ID" value="AAX46540.1"/>
    <property type="molecule type" value="mRNA"/>
</dbReference>
<dbReference type="RefSeq" id="NP_001030377.1">
    <property type="nucleotide sequence ID" value="NM_001035300.1"/>
</dbReference>
<dbReference type="FunCoup" id="Q58DA4">
    <property type="interactions" value="2027"/>
</dbReference>
<dbReference type="STRING" id="9913.ENSBTAP00000071986"/>
<dbReference type="PaxDb" id="9913-ENSBTAP00000044244"/>
<dbReference type="GeneID" id="514869"/>
<dbReference type="KEGG" id="bta:514869"/>
<dbReference type="CTD" id="113419"/>
<dbReference type="eggNOG" id="KOG4136">
    <property type="taxonomic scope" value="Eukaryota"/>
</dbReference>
<dbReference type="InParanoid" id="Q58DA4"/>
<dbReference type="OrthoDB" id="28257at2759"/>
<dbReference type="Proteomes" id="UP000009136">
    <property type="component" value="Unplaced"/>
</dbReference>
<dbReference type="GO" id="GO:0030134">
    <property type="term" value="C:COPII-coated ER to Golgi transport vesicle"/>
    <property type="evidence" value="ECO:0000318"/>
    <property type="project" value="GO_Central"/>
</dbReference>
<dbReference type="GO" id="GO:0005789">
    <property type="term" value="C:endoplasmic reticulum membrane"/>
    <property type="evidence" value="ECO:0000318"/>
    <property type="project" value="GO_Central"/>
</dbReference>
<dbReference type="GO" id="GO:0000139">
    <property type="term" value="C:Golgi membrane"/>
    <property type="evidence" value="ECO:0000318"/>
    <property type="project" value="GO_Central"/>
</dbReference>
<dbReference type="GO" id="GO:0097020">
    <property type="term" value="F:COPII receptor activity"/>
    <property type="evidence" value="ECO:0000318"/>
    <property type="project" value="GO_Central"/>
</dbReference>
<dbReference type="GO" id="GO:0006888">
    <property type="term" value="P:endoplasmic reticulum to Golgi vesicle-mediated transport"/>
    <property type="evidence" value="ECO:0000318"/>
    <property type="project" value="GO_Central"/>
</dbReference>
<dbReference type="InterPro" id="IPR007277">
    <property type="entry name" value="Svp26/Tex261"/>
</dbReference>
<dbReference type="PANTHER" id="PTHR13144:SF0">
    <property type="entry name" value="PROTEIN TEX261"/>
    <property type="match status" value="1"/>
</dbReference>
<dbReference type="PANTHER" id="PTHR13144">
    <property type="entry name" value="TEX261 PROTEIN"/>
    <property type="match status" value="1"/>
</dbReference>
<dbReference type="Pfam" id="PF04148">
    <property type="entry name" value="Erv26"/>
    <property type="match status" value="1"/>
</dbReference>
<name>TX261_BOVIN</name>
<organism>
    <name type="scientific">Bos taurus</name>
    <name type="common">Bovine</name>
    <dbReference type="NCBI Taxonomy" id="9913"/>
    <lineage>
        <taxon>Eukaryota</taxon>
        <taxon>Metazoa</taxon>
        <taxon>Chordata</taxon>
        <taxon>Craniata</taxon>
        <taxon>Vertebrata</taxon>
        <taxon>Euteleostomi</taxon>
        <taxon>Mammalia</taxon>
        <taxon>Eutheria</taxon>
        <taxon>Laurasiatheria</taxon>
        <taxon>Artiodactyla</taxon>
        <taxon>Ruminantia</taxon>
        <taxon>Pecora</taxon>
        <taxon>Bovidae</taxon>
        <taxon>Bovinae</taxon>
        <taxon>Bos</taxon>
    </lineage>
</organism>
<sequence>MVGVTLANVLPVCLALLPPPAAGLYYLAELIEEYTVATSRIIKYMIWFSTAVLIGLYVFERFPTYMIGVGLFTNLVYFGLLQTFPFIMLTSPNFILSCGLVVVNHYLAFQFFAEEYYPFSEVLAYFTFCLWIIPFAFFVSLSAGENVLPSTMQPGDDVVSNYFTKGKRGKRLGILVVFSFIKEAILPSRQKIY</sequence>
<comment type="subcellular location">
    <subcellularLocation>
        <location evidence="2">Membrane</location>
        <topology evidence="2">Multi-pass membrane protein</topology>
    </subcellularLocation>
</comment>
<comment type="similarity">
    <text evidence="2">Belongs to the SVP26 family.</text>
</comment>
<proteinExistence type="evidence at transcript level"/>
<reference key="1">
    <citation type="journal article" date="2005" name="BMC Genomics">
        <title>Characterization of 954 bovine full-CDS cDNA sequences.</title>
        <authorList>
            <person name="Harhay G.P."/>
            <person name="Sonstegard T.S."/>
            <person name="Keele J.W."/>
            <person name="Heaton M.P."/>
            <person name="Clawson M.L."/>
            <person name="Snelling W.M."/>
            <person name="Wiedmann R.T."/>
            <person name="Van Tassell C.P."/>
            <person name="Smith T.P.L."/>
        </authorList>
    </citation>
    <scope>NUCLEOTIDE SEQUENCE [LARGE SCALE MRNA]</scope>
</reference>
<protein>
    <recommendedName>
        <fullName>Protein TEX261</fullName>
    </recommendedName>
</protein>
<feature type="chain" id="PRO_0000247432" description="Protein TEX261">
    <location>
        <begin position="1"/>
        <end position="193"/>
    </location>
</feature>
<feature type="transmembrane region" description="Helical" evidence="1">
    <location>
        <begin position="1"/>
        <end position="21"/>
    </location>
</feature>
<feature type="transmembrane region" description="Helical" evidence="1">
    <location>
        <begin position="39"/>
        <end position="59"/>
    </location>
</feature>
<feature type="transmembrane region" description="Helical" evidence="1">
    <location>
        <begin position="67"/>
        <end position="87"/>
    </location>
</feature>
<feature type="transmembrane region" description="Helical" evidence="1">
    <location>
        <begin position="94"/>
        <end position="114"/>
    </location>
</feature>
<feature type="transmembrane region" description="Helical" evidence="1">
    <location>
        <begin position="122"/>
        <end position="142"/>
    </location>
</feature>
<accession>Q58DA4</accession>
<keyword id="KW-0472">Membrane</keyword>
<keyword id="KW-1185">Reference proteome</keyword>
<keyword id="KW-0812">Transmembrane</keyword>
<keyword id="KW-1133">Transmembrane helix</keyword>
<evidence type="ECO:0000255" key="1"/>
<evidence type="ECO:0000305" key="2"/>
<gene>
    <name type="primary">TEX261</name>
</gene>